<protein>
    <recommendedName>
        <fullName evidence="1">Histidine--tRNA ligase</fullName>
        <ecNumber evidence="1">6.1.1.21</ecNumber>
    </recommendedName>
    <alternativeName>
        <fullName evidence="1">Histidyl-tRNA synthetase</fullName>
        <shortName evidence="1">HisRS</shortName>
    </alternativeName>
</protein>
<proteinExistence type="inferred from homology"/>
<evidence type="ECO:0000255" key="1">
    <source>
        <dbReference type="HAMAP-Rule" id="MF_00127"/>
    </source>
</evidence>
<reference key="1">
    <citation type="journal article" date="2006" name="PLoS Genet.">
        <title>Comparative genomics of emerging human ehrlichiosis agents.</title>
        <authorList>
            <person name="Dunning Hotopp J.C."/>
            <person name="Lin M."/>
            <person name="Madupu R."/>
            <person name="Crabtree J."/>
            <person name="Angiuoli S.V."/>
            <person name="Eisen J.A."/>
            <person name="Seshadri R."/>
            <person name="Ren Q."/>
            <person name="Wu M."/>
            <person name="Utterback T.R."/>
            <person name="Smith S."/>
            <person name="Lewis M."/>
            <person name="Khouri H."/>
            <person name="Zhang C."/>
            <person name="Niu H."/>
            <person name="Lin Q."/>
            <person name="Ohashi N."/>
            <person name="Zhi N."/>
            <person name="Nelson W.C."/>
            <person name="Brinkac L.M."/>
            <person name="Dodson R.J."/>
            <person name="Rosovitz M.J."/>
            <person name="Sundaram J.P."/>
            <person name="Daugherty S.C."/>
            <person name="Davidsen T."/>
            <person name="Durkin A.S."/>
            <person name="Gwinn M.L."/>
            <person name="Haft D.H."/>
            <person name="Selengut J.D."/>
            <person name="Sullivan S.A."/>
            <person name="Zafar N."/>
            <person name="Zhou L."/>
            <person name="Benahmed F."/>
            <person name="Forberger H."/>
            <person name="Halpin R."/>
            <person name="Mulligan S."/>
            <person name="Robinson J."/>
            <person name="White O."/>
            <person name="Rikihisa Y."/>
            <person name="Tettelin H."/>
        </authorList>
    </citation>
    <scope>NUCLEOTIDE SEQUENCE [LARGE SCALE GENOMIC DNA]</scope>
    <source>
        <strain>ATCC CRL-10679 / Arkansas</strain>
    </source>
</reference>
<gene>
    <name evidence="1" type="primary">hisS</name>
    <name type="ordered locus">ECH_0291</name>
</gene>
<keyword id="KW-0030">Aminoacyl-tRNA synthetase</keyword>
<keyword id="KW-0067">ATP-binding</keyword>
<keyword id="KW-0963">Cytoplasm</keyword>
<keyword id="KW-0436">Ligase</keyword>
<keyword id="KW-0547">Nucleotide-binding</keyword>
<keyword id="KW-0648">Protein biosynthesis</keyword>
<keyword id="KW-1185">Reference proteome</keyword>
<name>SYH_EHRCR</name>
<feature type="chain" id="PRO_1000016358" description="Histidine--tRNA ligase">
    <location>
        <begin position="1"/>
        <end position="413"/>
    </location>
</feature>
<dbReference type="EC" id="6.1.1.21" evidence="1"/>
<dbReference type="EMBL" id="CP000236">
    <property type="protein sequence ID" value="ABD44995.1"/>
    <property type="molecule type" value="Genomic_DNA"/>
</dbReference>
<dbReference type="RefSeq" id="WP_006011310.1">
    <property type="nucleotide sequence ID" value="NC_007799.1"/>
</dbReference>
<dbReference type="SMR" id="Q2GHH1"/>
<dbReference type="STRING" id="205920.ECH_0291"/>
<dbReference type="KEGG" id="ech:ECH_0291"/>
<dbReference type="eggNOG" id="COG0124">
    <property type="taxonomic scope" value="Bacteria"/>
</dbReference>
<dbReference type="HOGENOM" id="CLU_025113_1_0_5"/>
<dbReference type="OrthoDB" id="9800814at2"/>
<dbReference type="Proteomes" id="UP000008320">
    <property type="component" value="Chromosome"/>
</dbReference>
<dbReference type="GO" id="GO:0005737">
    <property type="term" value="C:cytoplasm"/>
    <property type="evidence" value="ECO:0007669"/>
    <property type="project" value="UniProtKB-SubCell"/>
</dbReference>
<dbReference type="GO" id="GO:0005524">
    <property type="term" value="F:ATP binding"/>
    <property type="evidence" value="ECO:0007669"/>
    <property type="project" value="UniProtKB-UniRule"/>
</dbReference>
<dbReference type="GO" id="GO:0004821">
    <property type="term" value="F:histidine-tRNA ligase activity"/>
    <property type="evidence" value="ECO:0007669"/>
    <property type="project" value="UniProtKB-UniRule"/>
</dbReference>
<dbReference type="GO" id="GO:0006427">
    <property type="term" value="P:histidyl-tRNA aminoacylation"/>
    <property type="evidence" value="ECO:0007669"/>
    <property type="project" value="UniProtKB-UniRule"/>
</dbReference>
<dbReference type="CDD" id="cd00773">
    <property type="entry name" value="HisRS-like_core"/>
    <property type="match status" value="1"/>
</dbReference>
<dbReference type="CDD" id="cd00859">
    <property type="entry name" value="HisRS_anticodon"/>
    <property type="match status" value="1"/>
</dbReference>
<dbReference type="Gene3D" id="3.40.50.800">
    <property type="entry name" value="Anticodon-binding domain"/>
    <property type="match status" value="1"/>
</dbReference>
<dbReference type="Gene3D" id="3.30.930.10">
    <property type="entry name" value="Bira Bifunctional Protein, Domain 2"/>
    <property type="match status" value="1"/>
</dbReference>
<dbReference type="HAMAP" id="MF_00127">
    <property type="entry name" value="His_tRNA_synth"/>
    <property type="match status" value="1"/>
</dbReference>
<dbReference type="InterPro" id="IPR006195">
    <property type="entry name" value="aa-tRNA-synth_II"/>
</dbReference>
<dbReference type="InterPro" id="IPR045864">
    <property type="entry name" value="aa-tRNA-synth_II/BPL/LPL"/>
</dbReference>
<dbReference type="InterPro" id="IPR004154">
    <property type="entry name" value="Anticodon-bd"/>
</dbReference>
<dbReference type="InterPro" id="IPR036621">
    <property type="entry name" value="Anticodon-bd_dom_sf"/>
</dbReference>
<dbReference type="InterPro" id="IPR015807">
    <property type="entry name" value="His-tRNA-ligase"/>
</dbReference>
<dbReference type="InterPro" id="IPR041715">
    <property type="entry name" value="HisRS-like_core"/>
</dbReference>
<dbReference type="InterPro" id="IPR004516">
    <property type="entry name" value="HisRS/HisZ"/>
</dbReference>
<dbReference type="InterPro" id="IPR033656">
    <property type="entry name" value="HisRS_anticodon"/>
</dbReference>
<dbReference type="NCBIfam" id="TIGR00442">
    <property type="entry name" value="hisS"/>
    <property type="match status" value="1"/>
</dbReference>
<dbReference type="PANTHER" id="PTHR43707:SF1">
    <property type="entry name" value="HISTIDINE--TRNA LIGASE, MITOCHONDRIAL-RELATED"/>
    <property type="match status" value="1"/>
</dbReference>
<dbReference type="PANTHER" id="PTHR43707">
    <property type="entry name" value="HISTIDYL-TRNA SYNTHETASE"/>
    <property type="match status" value="1"/>
</dbReference>
<dbReference type="Pfam" id="PF03129">
    <property type="entry name" value="HGTP_anticodon"/>
    <property type="match status" value="1"/>
</dbReference>
<dbReference type="Pfam" id="PF13393">
    <property type="entry name" value="tRNA-synt_His"/>
    <property type="match status" value="1"/>
</dbReference>
<dbReference type="PIRSF" id="PIRSF001549">
    <property type="entry name" value="His-tRNA_synth"/>
    <property type="match status" value="1"/>
</dbReference>
<dbReference type="SUPFAM" id="SSF52954">
    <property type="entry name" value="Class II aaRS ABD-related"/>
    <property type="match status" value="1"/>
</dbReference>
<dbReference type="SUPFAM" id="SSF55681">
    <property type="entry name" value="Class II aaRS and biotin synthetases"/>
    <property type="match status" value="1"/>
</dbReference>
<dbReference type="PROSITE" id="PS50862">
    <property type="entry name" value="AA_TRNA_LIGASE_II"/>
    <property type="match status" value="1"/>
</dbReference>
<sequence length="413" mass="47346">MQRDKLREVRGTKDLLGIELYKFQYIHRLSQSIAHRYGFIAVDTPIIEFTEVFTKTLGDDSDIVMKEMYNFQDKSGENITLRPEFTSAIVRVLINKNLIIPVKLFSSGPVFRYERPQKCRQRQFHQVNFEFFGSDLPLADIEMIALGYHILDELKLLDDITLEINFLGDKETMNSYKLSLIEYLNKYKKDLSEDSQRRLITNPLRILDSKAPEDREILLNVPNISYFYSKSSNDFFAEVLYGLDELCIPYKVNHSIVRGLDYYCNTVFEFTTSKLGAQNAVVAGGRYDGLVKSMGGNDTPAVGFAMGVERVSALIDYKHQEPRSVVLIPIGKDAVSYALKLAYELRCNGISVNWNYKNANLRNALRKVGDDNIVLIFGDEELKNNTIQVKDMKTGEQQEIVRCDLLDTLCNKI</sequence>
<accession>Q2GHH1</accession>
<organism>
    <name type="scientific">Ehrlichia chaffeensis (strain ATCC CRL-10679 / Arkansas)</name>
    <dbReference type="NCBI Taxonomy" id="205920"/>
    <lineage>
        <taxon>Bacteria</taxon>
        <taxon>Pseudomonadati</taxon>
        <taxon>Pseudomonadota</taxon>
        <taxon>Alphaproteobacteria</taxon>
        <taxon>Rickettsiales</taxon>
        <taxon>Anaplasmataceae</taxon>
        <taxon>Ehrlichia</taxon>
    </lineage>
</organism>
<comment type="catalytic activity">
    <reaction evidence="1">
        <text>tRNA(His) + L-histidine + ATP = L-histidyl-tRNA(His) + AMP + diphosphate + H(+)</text>
        <dbReference type="Rhea" id="RHEA:17313"/>
        <dbReference type="Rhea" id="RHEA-COMP:9665"/>
        <dbReference type="Rhea" id="RHEA-COMP:9689"/>
        <dbReference type="ChEBI" id="CHEBI:15378"/>
        <dbReference type="ChEBI" id="CHEBI:30616"/>
        <dbReference type="ChEBI" id="CHEBI:33019"/>
        <dbReference type="ChEBI" id="CHEBI:57595"/>
        <dbReference type="ChEBI" id="CHEBI:78442"/>
        <dbReference type="ChEBI" id="CHEBI:78527"/>
        <dbReference type="ChEBI" id="CHEBI:456215"/>
        <dbReference type="EC" id="6.1.1.21"/>
    </reaction>
</comment>
<comment type="subunit">
    <text evidence="1">Homodimer.</text>
</comment>
<comment type="subcellular location">
    <subcellularLocation>
        <location evidence="1">Cytoplasm</location>
    </subcellularLocation>
</comment>
<comment type="similarity">
    <text evidence="1">Belongs to the class-II aminoacyl-tRNA synthetase family.</text>
</comment>